<feature type="chain" id="PRO_0000174838" description="Co-chaperonin GroES">
    <location>
        <begin position="1"/>
        <end position="95"/>
    </location>
</feature>
<accession>Q5LV16</accession>
<name>CH10_RUEPO</name>
<comment type="function">
    <text evidence="1">Together with the chaperonin GroEL, plays an essential role in assisting protein folding. The GroEL-GroES system forms a nano-cage that allows encapsulation of the non-native substrate proteins and provides a physical environment optimized to promote and accelerate protein folding. GroES binds to the apical surface of the GroEL ring, thereby capping the opening of the GroEL channel.</text>
</comment>
<comment type="subunit">
    <text evidence="1">Heptamer of 7 subunits arranged in a ring. Interacts with the chaperonin GroEL.</text>
</comment>
<comment type="subcellular location">
    <subcellularLocation>
        <location evidence="1">Cytoplasm</location>
    </subcellularLocation>
</comment>
<comment type="similarity">
    <text evidence="1">Belongs to the GroES chaperonin family.</text>
</comment>
<dbReference type="EMBL" id="CP000031">
    <property type="protein sequence ID" value="AAV94191.1"/>
    <property type="molecule type" value="Genomic_DNA"/>
</dbReference>
<dbReference type="RefSeq" id="WP_011046635.1">
    <property type="nucleotide sequence ID" value="NC_003911.12"/>
</dbReference>
<dbReference type="SMR" id="Q5LV16"/>
<dbReference type="STRING" id="246200.SPO0886"/>
<dbReference type="PaxDb" id="246200-SPO0886"/>
<dbReference type="KEGG" id="sil:SPO0886"/>
<dbReference type="eggNOG" id="COG0234">
    <property type="taxonomic scope" value="Bacteria"/>
</dbReference>
<dbReference type="HOGENOM" id="CLU_132825_1_0_5"/>
<dbReference type="OrthoDB" id="9806791at2"/>
<dbReference type="Proteomes" id="UP000001023">
    <property type="component" value="Chromosome"/>
</dbReference>
<dbReference type="GO" id="GO:0005737">
    <property type="term" value="C:cytoplasm"/>
    <property type="evidence" value="ECO:0007669"/>
    <property type="project" value="UniProtKB-SubCell"/>
</dbReference>
<dbReference type="GO" id="GO:0005524">
    <property type="term" value="F:ATP binding"/>
    <property type="evidence" value="ECO:0007669"/>
    <property type="project" value="InterPro"/>
</dbReference>
<dbReference type="GO" id="GO:0046872">
    <property type="term" value="F:metal ion binding"/>
    <property type="evidence" value="ECO:0007669"/>
    <property type="project" value="TreeGrafter"/>
</dbReference>
<dbReference type="GO" id="GO:0044183">
    <property type="term" value="F:protein folding chaperone"/>
    <property type="evidence" value="ECO:0007669"/>
    <property type="project" value="InterPro"/>
</dbReference>
<dbReference type="GO" id="GO:0051087">
    <property type="term" value="F:protein-folding chaperone binding"/>
    <property type="evidence" value="ECO:0007669"/>
    <property type="project" value="TreeGrafter"/>
</dbReference>
<dbReference type="GO" id="GO:0051082">
    <property type="term" value="F:unfolded protein binding"/>
    <property type="evidence" value="ECO:0007669"/>
    <property type="project" value="TreeGrafter"/>
</dbReference>
<dbReference type="GO" id="GO:0051085">
    <property type="term" value="P:chaperone cofactor-dependent protein refolding"/>
    <property type="evidence" value="ECO:0007669"/>
    <property type="project" value="TreeGrafter"/>
</dbReference>
<dbReference type="CDD" id="cd00320">
    <property type="entry name" value="cpn10"/>
    <property type="match status" value="1"/>
</dbReference>
<dbReference type="FunFam" id="2.30.33.40:FF:000001">
    <property type="entry name" value="10 kDa chaperonin"/>
    <property type="match status" value="1"/>
</dbReference>
<dbReference type="Gene3D" id="2.30.33.40">
    <property type="entry name" value="GroES chaperonin"/>
    <property type="match status" value="1"/>
</dbReference>
<dbReference type="HAMAP" id="MF_00580">
    <property type="entry name" value="CH10"/>
    <property type="match status" value="1"/>
</dbReference>
<dbReference type="InterPro" id="IPR020818">
    <property type="entry name" value="Chaperonin_GroES"/>
</dbReference>
<dbReference type="InterPro" id="IPR037124">
    <property type="entry name" value="Chaperonin_GroES_sf"/>
</dbReference>
<dbReference type="InterPro" id="IPR018369">
    <property type="entry name" value="Chaprnonin_Cpn10_CS"/>
</dbReference>
<dbReference type="InterPro" id="IPR011032">
    <property type="entry name" value="GroES-like_sf"/>
</dbReference>
<dbReference type="NCBIfam" id="NF001527">
    <property type="entry name" value="PRK00364.1-2"/>
    <property type="match status" value="1"/>
</dbReference>
<dbReference type="NCBIfam" id="NF001529">
    <property type="entry name" value="PRK00364.1-5"/>
    <property type="match status" value="1"/>
</dbReference>
<dbReference type="NCBIfam" id="NF001531">
    <property type="entry name" value="PRK00364.2-2"/>
    <property type="match status" value="1"/>
</dbReference>
<dbReference type="NCBIfam" id="NF001533">
    <property type="entry name" value="PRK00364.2-4"/>
    <property type="match status" value="1"/>
</dbReference>
<dbReference type="NCBIfam" id="NF001534">
    <property type="entry name" value="PRK00364.2-5"/>
    <property type="match status" value="1"/>
</dbReference>
<dbReference type="PANTHER" id="PTHR10772">
    <property type="entry name" value="10 KDA HEAT SHOCK PROTEIN"/>
    <property type="match status" value="1"/>
</dbReference>
<dbReference type="PANTHER" id="PTHR10772:SF58">
    <property type="entry name" value="CO-CHAPERONIN GROES"/>
    <property type="match status" value="1"/>
</dbReference>
<dbReference type="Pfam" id="PF00166">
    <property type="entry name" value="Cpn10"/>
    <property type="match status" value="1"/>
</dbReference>
<dbReference type="PRINTS" id="PR00297">
    <property type="entry name" value="CHAPERONIN10"/>
</dbReference>
<dbReference type="SMART" id="SM00883">
    <property type="entry name" value="Cpn10"/>
    <property type="match status" value="1"/>
</dbReference>
<dbReference type="SUPFAM" id="SSF50129">
    <property type="entry name" value="GroES-like"/>
    <property type="match status" value="1"/>
</dbReference>
<dbReference type="PROSITE" id="PS00681">
    <property type="entry name" value="CHAPERONINS_CPN10"/>
    <property type="match status" value="1"/>
</dbReference>
<proteinExistence type="inferred from homology"/>
<evidence type="ECO:0000255" key="1">
    <source>
        <dbReference type="HAMAP-Rule" id="MF_00580"/>
    </source>
</evidence>
<reference key="1">
    <citation type="journal article" date="2004" name="Nature">
        <title>Genome sequence of Silicibacter pomeroyi reveals adaptations to the marine environment.</title>
        <authorList>
            <person name="Moran M.A."/>
            <person name="Buchan A."/>
            <person name="Gonzalez J.M."/>
            <person name="Heidelberg J.F."/>
            <person name="Whitman W.B."/>
            <person name="Kiene R.P."/>
            <person name="Henriksen J.R."/>
            <person name="King G.M."/>
            <person name="Belas R."/>
            <person name="Fuqua C."/>
            <person name="Brinkac L.M."/>
            <person name="Lewis M."/>
            <person name="Johri S."/>
            <person name="Weaver B."/>
            <person name="Pai G."/>
            <person name="Eisen J.A."/>
            <person name="Rahe E."/>
            <person name="Sheldon W.M."/>
            <person name="Ye W."/>
            <person name="Miller T.R."/>
            <person name="Carlton J."/>
            <person name="Rasko D.A."/>
            <person name="Paulsen I.T."/>
            <person name="Ren Q."/>
            <person name="Daugherty S.C."/>
            <person name="DeBoy R.T."/>
            <person name="Dodson R.J."/>
            <person name="Durkin A.S."/>
            <person name="Madupu R."/>
            <person name="Nelson W.C."/>
            <person name="Sullivan S.A."/>
            <person name="Rosovitz M.J."/>
            <person name="Haft D.H."/>
            <person name="Selengut J."/>
            <person name="Ward N."/>
        </authorList>
    </citation>
    <scope>NUCLEOTIDE SEQUENCE [LARGE SCALE GENOMIC DNA]</scope>
    <source>
        <strain>ATCC 700808 / DSM 15171 / DSS-3</strain>
    </source>
</reference>
<reference key="2">
    <citation type="journal article" date="2014" name="Stand. Genomic Sci.">
        <title>An updated genome annotation for the model marine bacterium Ruegeria pomeroyi DSS-3.</title>
        <authorList>
            <person name="Rivers A.R."/>
            <person name="Smith C.B."/>
            <person name="Moran M.A."/>
        </authorList>
    </citation>
    <scope>GENOME REANNOTATION</scope>
    <source>
        <strain>ATCC 700808 / DSM 15171 / DSS-3</strain>
    </source>
</reference>
<sequence>MALKPLHDRVLVRRTESEEKTAGGLIIPDSAKEKPSEGVVVACGEGARKDSGELIAMAVKSGDRVLFGKWSGTEVTVDGEELLMMKESDIMGIIE</sequence>
<organism>
    <name type="scientific">Ruegeria pomeroyi (strain ATCC 700808 / DSM 15171 / DSS-3)</name>
    <name type="common">Silicibacter pomeroyi</name>
    <dbReference type="NCBI Taxonomy" id="246200"/>
    <lineage>
        <taxon>Bacteria</taxon>
        <taxon>Pseudomonadati</taxon>
        <taxon>Pseudomonadota</taxon>
        <taxon>Alphaproteobacteria</taxon>
        <taxon>Rhodobacterales</taxon>
        <taxon>Roseobacteraceae</taxon>
        <taxon>Ruegeria</taxon>
    </lineage>
</organism>
<gene>
    <name evidence="1" type="primary">groES</name>
    <name evidence="1" type="synonym">groS</name>
    <name type="ordered locus">SPO0886</name>
</gene>
<protein>
    <recommendedName>
        <fullName evidence="1">Co-chaperonin GroES</fullName>
    </recommendedName>
    <alternativeName>
        <fullName evidence="1">10 kDa chaperonin</fullName>
    </alternativeName>
    <alternativeName>
        <fullName evidence="1">Chaperonin-10</fullName>
        <shortName evidence="1">Cpn10</shortName>
    </alternativeName>
</protein>
<keyword id="KW-0143">Chaperone</keyword>
<keyword id="KW-0963">Cytoplasm</keyword>
<keyword id="KW-1185">Reference proteome</keyword>